<reference key="1">
    <citation type="journal article" date="1993" name="J. Bacteriol.">
        <title>Characterization of the RNase P RNA of Sulfolobus acidocaldarius.</title>
        <authorList>
            <person name="LaGrandeur T.E."/>
            <person name="Darr S.C."/>
            <person name="Haas E.S."/>
            <person name="Pace N.R."/>
        </authorList>
    </citation>
    <scope>NUCLEOTIDE SEQUENCE [GENOMIC DNA]</scope>
</reference>
<reference key="2">
    <citation type="journal article" date="2005" name="J. Bacteriol.">
        <title>The genome of Sulfolobus acidocaldarius, a model organism of the Crenarchaeota.</title>
        <authorList>
            <person name="Chen L."/>
            <person name="Bruegger K."/>
            <person name="Skovgaard M."/>
            <person name="Redder P."/>
            <person name="She Q."/>
            <person name="Torarinsson E."/>
            <person name="Greve B."/>
            <person name="Awayez M."/>
            <person name="Zibat A."/>
            <person name="Klenk H.-P."/>
            <person name="Garrett R.A."/>
        </authorList>
    </citation>
    <scope>NUCLEOTIDE SEQUENCE [LARGE SCALE GENOMIC DNA]</scope>
    <source>
        <strain>ATCC 33909 / DSM 639 / JCM 8929 / NBRC 15157 / NCIMB 11770</strain>
    </source>
</reference>
<keyword id="KW-1003">Cell membrane</keyword>
<keyword id="KW-0472">Membrane</keyword>
<keyword id="KW-0653">Protein transport</keyword>
<keyword id="KW-1185">Reference proteome</keyword>
<keyword id="KW-0811">Translocation</keyword>
<keyword id="KW-0812">Transmembrane</keyword>
<keyword id="KW-1133">Transmembrane helix</keyword>
<keyword id="KW-0813">Transport</keyword>
<dbReference type="EMBL" id="L13597">
    <property type="status" value="NOT_ANNOTATED_CDS"/>
    <property type="molecule type" value="Unassigned_DNA"/>
</dbReference>
<dbReference type="EMBL" id="CP000077">
    <property type="protein sequence ID" value="AAY80107.1"/>
    <property type="molecule type" value="Genomic_DNA"/>
</dbReference>
<dbReference type="RefSeq" id="WP_011277609.1">
    <property type="nucleotide sequence ID" value="NC_007181.1"/>
</dbReference>
<dbReference type="SMR" id="P60464"/>
<dbReference type="STRING" id="330779.Saci_0729"/>
<dbReference type="GeneID" id="14551246"/>
<dbReference type="KEGG" id="sai:Saci_0729"/>
<dbReference type="PATRIC" id="fig|330779.12.peg.698"/>
<dbReference type="eggNOG" id="arCOG02957">
    <property type="taxonomic scope" value="Archaea"/>
</dbReference>
<dbReference type="HOGENOM" id="CLU_208205_2_1_2"/>
<dbReference type="Proteomes" id="UP000001018">
    <property type="component" value="Chromosome"/>
</dbReference>
<dbReference type="GO" id="GO:0005886">
    <property type="term" value="C:plasma membrane"/>
    <property type="evidence" value="ECO:0007669"/>
    <property type="project" value="UniProtKB-SubCell"/>
</dbReference>
<dbReference type="GO" id="GO:0015031">
    <property type="term" value="P:protein transport"/>
    <property type="evidence" value="ECO:0007669"/>
    <property type="project" value="UniProtKB-UniRule"/>
</dbReference>
<dbReference type="HAMAP" id="MF_00751">
    <property type="entry name" value="SecG"/>
    <property type="match status" value="1"/>
</dbReference>
<dbReference type="InterPro" id="IPR023531">
    <property type="entry name" value="Preprot_translocase_SecG"/>
</dbReference>
<dbReference type="InterPro" id="IPR016482">
    <property type="entry name" value="SecG/Sec61-beta/Sbh"/>
</dbReference>
<dbReference type="NCBIfam" id="NF002318">
    <property type="entry name" value="PRK01253.1"/>
    <property type="match status" value="1"/>
</dbReference>
<dbReference type="Pfam" id="PF03911">
    <property type="entry name" value="Sec61_beta"/>
    <property type="match status" value="1"/>
</dbReference>
<accession>P60464</accession>
<accession>Q4JAS2</accession>
<gene>
    <name type="ordered locus">Saci_0729</name>
</gene>
<evidence type="ECO:0000250" key="1"/>
<evidence type="ECO:0000255" key="2"/>
<evidence type="ECO:0000305" key="3"/>
<protein>
    <recommendedName>
        <fullName>Preprotein translocase subunit SecG</fullName>
    </recommendedName>
    <alternativeName>
        <fullName>Protein transport protein Sec61 subunit beta homolog</fullName>
    </alternativeName>
</protein>
<name>SECG_SULAC</name>
<sequence length="59" mass="6366">MPSSKKKKEDVPIASMAGLVRYYESEKEKVKISPKVVVVASIVLIAGVIIASFIIPPPL</sequence>
<feature type="chain" id="PRO_0000157278" description="Preprotein translocase subunit SecG">
    <location>
        <begin position="1"/>
        <end position="59"/>
    </location>
</feature>
<feature type="topological domain" description="Cytoplasmic" evidence="2">
    <location>
        <begin position="1"/>
        <end position="35"/>
    </location>
</feature>
<feature type="transmembrane region" description="Helical" evidence="2">
    <location>
        <begin position="36"/>
        <end position="56"/>
    </location>
</feature>
<feature type="topological domain" description="Extracellular" evidence="2">
    <location>
        <begin position="57"/>
        <end position="59"/>
    </location>
</feature>
<organism>
    <name type="scientific">Sulfolobus acidocaldarius (strain ATCC 33909 / DSM 639 / JCM 8929 / NBRC 15157 / NCIMB 11770)</name>
    <dbReference type="NCBI Taxonomy" id="330779"/>
    <lineage>
        <taxon>Archaea</taxon>
        <taxon>Thermoproteota</taxon>
        <taxon>Thermoprotei</taxon>
        <taxon>Sulfolobales</taxon>
        <taxon>Sulfolobaceae</taxon>
        <taxon>Sulfolobus</taxon>
    </lineage>
</organism>
<proteinExistence type="inferred from homology"/>
<comment type="function">
    <text evidence="1">Involved in protein export. The function of the beta subunit is unknown, but it may be involved in stabilization of the trimeric complex (By similarity).</text>
</comment>
<comment type="subunit">
    <text evidence="1">Component of the protein translocase complex. Heterotrimer consisting of alpha (SecY), beta (SecG) and gamma (SecE) subunits. Can form oligomers of the heterotrimer (By similarity).</text>
</comment>
<comment type="subcellular location">
    <subcellularLocation>
        <location evidence="1">Cell membrane</location>
        <topology evidence="1">Single-pass membrane protein</topology>
    </subcellularLocation>
</comment>
<comment type="similarity">
    <text evidence="3">Belongs to the SEC61-beta family.</text>
</comment>
<comment type="sequence caution" evidence="3">
    <conflict type="frameshift">
        <sequence resource="EMBL" id="L13597"/>
    </conflict>
</comment>